<evidence type="ECO:0000256" key="1">
    <source>
        <dbReference type="SAM" id="MobiDB-lite"/>
    </source>
</evidence>
<evidence type="ECO:0000269" key="2">
    <source>
    </source>
</evidence>
<evidence type="ECO:0000269" key="3">
    <source>
    </source>
</evidence>
<evidence type="ECO:0000269" key="4">
    <source>
    </source>
</evidence>
<evidence type="ECO:0000269" key="5">
    <source>
    </source>
</evidence>
<evidence type="ECO:0000269" key="6">
    <source>
    </source>
</evidence>
<evidence type="ECO:0000269" key="7">
    <source>
    </source>
</evidence>
<evidence type="ECO:0000269" key="8">
    <source>
    </source>
</evidence>
<evidence type="ECO:0000269" key="9">
    <source>
    </source>
</evidence>
<evidence type="ECO:0000303" key="10">
    <source>
    </source>
</evidence>
<evidence type="ECO:0000303" key="11">
    <source>
    </source>
</evidence>
<evidence type="ECO:0000303" key="12">
    <source>
    </source>
</evidence>
<evidence type="ECO:0000305" key="13"/>
<evidence type="ECO:0000312" key="14">
    <source>
        <dbReference type="Araport" id="AT5G28640"/>
    </source>
</evidence>
<evidence type="ECO:0000312" key="15">
    <source>
        <dbReference type="EMBL" id="AF272705"/>
    </source>
</evidence>
<protein>
    <recommendedName>
        <fullName evidence="10">GRF1-interacting factor 1</fullName>
        <shortName evidence="10">AtGIF1</shortName>
    </recommendedName>
    <alternativeName>
        <fullName evidence="11">Protein ANGUSTIFOLIA 3</fullName>
    </alternativeName>
    <alternativeName>
        <fullName evidence="10">Transcription coactivator GIF1</fullName>
    </alternativeName>
</protein>
<proteinExistence type="evidence at protein level"/>
<name>GIF1_ARATH</name>
<dbReference type="EMBL" id="AY102639">
    <property type="protein sequence ID" value="AAM52881.1"/>
    <property type="molecule type" value="mRNA"/>
</dbReference>
<dbReference type="EMBL" id="AF272705">
    <property type="status" value="NOT_ANNOTATED_CDS"/>
    <property type="molecule type" value="Genomic_DNA"/>
</dbReference>
<dbReference type="EMBL" id="CP002688">
    <property type="protein sequence ID" value="AED93820.1"/>
    <property type="molecule type" value="Genomic_DNA"/>
</dbReference>
<dbReference type="EMBL" id="BT002848">
    <property type="protein sequence ID" value="AAO22666.1"/>
    <property type="molecule type" value="mRNA"/>
</dbReference>
<dbReference type="EMBL" id="BT004462">
    <property type="protein sequence ID" value="AAO42456.1"/>
    <property type="molecule type" value="mRNA"/>
</dbReference>
<dbReference type="RefSeq" id="NP_198216.2">
    <property type="nucleotide sequence ID" value="NM_122747.4"/>
</dbReference>
<dbReference type="SMR" id="Q8L8A5"/>
<dbReference type="BioGRID" id="18241">
    <property type="interactions" value="134"/>
</dbReference>
<dbReference type="ComplexPortal" id="CPX-7723">
    <property type="entry name" value="BRAHMA SWI/SNF ATP-dependent chromatin remodeling complex"/>
</dbReference>
<dbReference type="ComplexPortal" id="CPX-7726">
    <property type="entry name" value="SYD-associated SWI/SNF ATP-dependent chromatin remodeling complex"/>
</dbReference>
<dbReference type="FunCoup" id="Q8L8A5">
    <property type="interactions" value="208"/>
</dbReference>
<dbReference type="IntAct" id="Q8L8A5">
    <property type="interactions" value="96"/>
</dbReference>
<dbReference type="STRING" id="3702.Q8L8A5"/>
<dbReference type="iPTMnet" id="Q8L8A5"/>
<dbReference type="PaxDb" id="3702-AT5G28640.1"/>
<dbReference type="ProteomicsDB" id="220760"/>
<dbReference type="EnsemblPlants" id="AT5G28640.1">
    <property type="protein sequence ID" value="AT5G28640.1"/>
    <property type="gene ID" value="AT5G28640"/>
</dbReference>
<dbReference type="GeneID" id="832968"/>
<dbReference type="Gramene" id="AT5G28640.1">
    <property type="protein sequence ID" value="AT5G28640.1"/>
    <property type="gene ID" value="AT5G28640"/>
</dbReference>
<dbReference type="KEGG" id="ath:AT5G28640"/>
<dbReference type="Araport" id="AT5G28640"/>
<dbReference type="TAIR" id="AT5G28640">
    <property type="gene designation" value="AN3"/>
</dbReference>
<dbReference type="eggNOG" id="KOG3227">
    <property type="taxonomic scope" value="Eukaryota"/>
</dbReference>
<dbReference type="HOGENOM" id="CLU_086253_1_0_1"/>
<dbReference type="InParanoid" id="Q8L8A5"/>
<dbReference type="OMA" id="ENAHPGA"/>
<dbReference type="PhylomeDB" id="Q8L8A5"/>
<dbReference type="PRO" id="PR:Q8L8A5"/>
<dbReference type="Proteomes" id="UP000006548">
    <property type="component" value="Chromosome 5"/>
</dbReference>
<dbReference type="ExpressionAtlas" id="Q8L8A5">
    <property type="expression patterns" value="baseline and differential"/>
</dbReference>
<dbReference type="GO" id="GO:0003713">
    <property type="term" value="F:transcription coactivator activity"/>
    <property type="evidence" value="ECO:0000250"/>
    <property type="project" value="TAIR"/>
</dbReference>
<dbReference type="GO" id="GO:0009955">
    <property type="term" value="P:adaxial/abaxial pattern specification"/>
    <property type="evidence" value="ECO:0000315"/>
    <property type="project" value="UniProtKB"/>
</dbReference>
<dbReference type="GO" id="GO:0051301">
    <property type="term" value="P:cell division"/>
    <property type="evidence" value="ECO:0000315"/>
    <property type="project" value="TAIR"/>
</dbReference>
<dbReference type="GO" id="GO:0048825">
    <property type="term" value="P:cotyledon development"/>
    <property type="evidence" value="ECO:0000315"/>
    <property type="project" value="UniProtKB"/>
</dbReference>
<dbReference type="GO" id="GO:0048366">
    <property type="term" value="P:leaf development"/>
    <property type="evidence" value="ECO:0000315"/>
    <property type="project" value="UniProtKB"/>
</dbReference>
<dbReference type="GO" id="GO:0010468">
    <property type="term" value="P:regulation of gene expression"/>
    <property type="evidence" value="ECO:0000353"/>
    <property type="project" value="TAIR"/>
</dbReference>
<dbReference type="GO" id="GO:0010449">
    <property type="term" value="P:root meristem growth"/>
    <property type="evidence" value="ECO:0000316"/>
    <property type="project" value="TAIR"/>
</dbReference>
<dbReference type="InterPro" id="IPR007726">
    <property type="entry name" value="SS18_N"/>
</dbReference>
<dbReference type="Pfam" id="PF05030">
    <property type="entry name" value="SSXT"/>
    <property type="match status" value="1"/>
</dbReference>
<accession>Q8L8A5</accession>
<reference key="1">
    <citation type="journal article" date="2004" name="Proc. Natl. Acad. Sci. U.S.A.">
        <title>A transcriptional coactivator, AtGIF1, is involved in regulating leaf growth and morphology in Arabidopsis.</title>
        <authorList>
            <person name="Kim J.H."/>
            <person name="Kende H."/>
        </authorList>
    </citation>
    <scope>NUCLEOTIDE SEQUENCE [MRNA]</scope>
    <scope>FUNCTION</scope>
    <scope>DISRUPTION PHENOTYPE</scope>
    <scope>INTERACTION WITH GRF1 AND GRF2</scope>
    <scope>TISSUE SPECIFICITY</scope>
</reference>
<reference key="2">
    <citation type="journal article" date="2000" name="Nature">
        <title>Sequence and analysis of chromosome 5 of the plant Arabidopsis thaliana.</title>
        <authorList>
            <person name="Tabata S."/>
            <person name="Kaneko T."/>
            <person name="Nakamura Y."/>
            <person name="Kotani H."/>
            <person name="Kato T."/>
            <person name="Asamizu E."/>
            <person name="Miyajima N."/>
            <person name="Sasamoto S."/>
            <person name="Kimura T."/>
            <person name="Hosouchi T."/>
            <person name="Kawashima K."/>
            <person name="Kohara M."/>
            <person name="Matsumoto M."/>
            <person name="Matsuno A."/>
            <person name="Muraki A."/>
            <person name="Nakayama S."/>
            <person name="Nakazaki N."/>
            <person name="Naruo K."/>
            <person name="Okumura S."/>
            <person name="Shinpo S."/>
            <person name="Takeuchi C."/>
            <person name="Wada T."/>
            <person name="Watanabe A."/>
            <person name="Yamada M."/>
            <person name="Yasuda M."/>
            <person name="Sato S."/>
            <person name="de la Bastide M."/>
            <person name="Huang E."/>
            <person name="Spiegel L."/>
            <person name="Gnoj L."/>
            <person name="O'Shaughnessy A."/>
            <person name="Preston R."/>
            <person name="Habermann K."/>
            <person name="Murray J."/>
            <person name="Johnson D."/>
            <person name="Rohlfing T."/>
            <person name="Nelson J."/>
            <person name="Stoneking T."/>
            <person name="Pepin K."/>
            <person name="Spieth J."/>
            <person name="Sekhon M."/>
            <person name="Armstrong J."/>
            <person name="Becker M."/>
            <person name="Belter E."/>
            <person name="Cordum H."/>
            <person name="Cordes M."/>
            <person name="Courtney L."/>
            <person name="Courtney W."/>
            <person name="Dante M."/>
            <person name="Du H."/>
            <person name="Edwards J."/>
            <person name="Fryman J."/>
            <person name="Haakensen B."/>
            <person name="Lamar E."/>
            <person name="Latreille P."/>
            <person name="Leonard S."/>
            <person name="Meyer R."/>
            <person name="Mulvaney E."/>
            <person name="Ozersky P."/>
            <person name="Riley A."/>
            <person name="Strowmatt C."/>
            <person name="Wagner-McPherson C."/>
            <person name="Wollam A."/>
            <person name="Yoakum M."/>
            <person name="Bell M."/>
            <person name="Dedhia N."/>
            <person name="Parnell L."/>
            <person name="Shah R."/>
            <person name="Rodriguez M."/>
            <person name="Hoon See L."/>
            <person name="Vil D."/>
            <person name="Baker J."/>
            <person name="Kirchoff K."/>
            <person name="Toth K."/>
            <person name="King L."/>
            <person name="Bahret A."/>
            <person name="Miller B."/>
            <person name="Marra M.A."/>
            <person name="Martienssen R."/>
            <person name="McCombie W.R."/>
            <person name="Wilson R.K."/>
            <person name="Murphy G."/>
            <person name="Bancroft I."/>
            <person name="Volckaert G."/>
            <person name="Wambutt R."/>
            <person name="Duesterhoeft A."/>
            <person name="Stiekema W."/>
            <person name="Pohl T."/>
            <person name="Entian K.-D."/>
            <person name="Terryn N."/>
            <person name="Hartley N."/>
            <person name="Bent E."/>
            <person name="Johnson S."/>
            <person name="Langham S.-A."/>
            <person name="McCullagh B."/>
            <person name="Robben J."/>
            <person name="Grymonprez B."/>
            <person name="Zimmermann W."/>
            <person name="Ramsperger U."/>
            <person name="Wedler H."/>
            <person name="Balke K."/>
            <person name="Wedler E."/>
            <person name="Peters S."/>
            <person name="van Staveren M."/>
            <person name="Dirkse W."/>
            <person name="Mooijman P."/>
            <person name="Klein Lankhorst R."/>
            <person name="Weitzenegger T."/>
            <person name="Bothe G."/>
            <person name="Rose M."/>
            <person name="Hauf J."/>
            <person name="Berneiser S."/>
            <person name="Hempel S."/>
            <person name="Feldpausch M."/>
            <person name="Lamberth S."/>
            <person name="Villarroel R."/>
            <person name="Gielen J."/>
            <person name="Ardiles W."/>
            <person name="Bents O."/>
            <person name="Lemcke K."/>
            <person name="Kolesov G."/>
            <person name="Mayer K.F.X."/>
            <person name="Rudd S."/>
            <person name="Schoof H."/>
            <person name="Schueller C."/>
            <person name="Zaccaria P."/>
            <person name="Mewes H.-W."/>
            <person name="Bevan M."/>
            <person name="Fransz P.F."/>
        </authorList>
    </citation>
    <scope>NUCLEOTIDE SEQUENCE [LARGE SCALE GENOMIC DNA]</scope>
    <source>
        <strain>cv. Columbia</strain>
    </source>
</reference>
<reference key="3">
    <citation type="journal article" date="2017" name="Plant J.">
        <title>Araport11: a complete reannotation of the Arabidopsis thaliana reference genome.</title>
        <authorList>
            <person name="Cheng C.Y."/>
            <person name="Krishnakumar V."/>
            <person name="Chan A.P."/>
            <person name="Thibaud-Nissen F."/>
            <person name="Schobel S."/>
            <person name="Town C.D."/>
        </authorList>
    </citation>
    <scope>GENOME REANNOTATION</scope>
    <source>
        <strain>cv. Columbia</strain>
    </source>
</reference>
<reference key="4">
    <citation type="journal article" date="2003" name="Science">
        <title>Empirical analysis of transcriptional activity in the Arabidopsis genome.</title>
        <authorList>
            <person name="Yamada K."/>
            <person name="Lim J."/>
            <person name="Dale J.M."/>
            <person name="Chen H."/>
            <person name="Shinn P."/>
            <person name="Palm C.J."/>
            <person name="Southwick A.M."/>
            <person name="Wu H.C."/>
            <person name="Kim C.J."/>
            <person name="Nguyen M."/>
            <person name="Pham P.K."/>
            <person name="Cheuk R.F."/>
            <person name="Karlin-Newmann G."/>
            <person name="Liu S.X."/>
            <person name="Lam B."/>
            <person name="Sakano H."/>
            <person name="Wu T."/>
            <person name="Yu G."/>
            <person name="Miranda M."/>
            <person name="Quach H.L."/>
            <person name="Tripp M."/>
            <person name="Chang C.H."/>
            <person name="Lee J.M."/>
            <person name="Toriumi M.J."/>
            <person name="Chan M.M."/>
            <person name="Tang C.C."/>
            <person name="Onodera C.S."/>
            <person name="Deng J.M."/>
            <person name="Akiyama K."/>
            <person name="Ansari Y."/>
            <person name="Arakawa T."/>
            <person name="Banh J."/>
            <person name="Banno F."/>
            <person name="Bowser L."/>
            <person name="Brooks S.Y."/>
            <person name="Carninci P."/>
            <person name="Chao Q."/>
            <person name="Choy N."/>
            <person name="Enju A."/>
            <person name="Goldsmith A.D."/>
            <person name="Gurjal M."/>
            <person name="Hansen N.F."/>
            <person name="Hayashizaki Y."/>
            <person name="Johnson-Hopson C."/>
            <person name="Hsuan V.W."/>
            <person name="Iida K."/>
            <person name="Karnes M."/>
            <person name="Khan S."/>
            <person name="Koesema E."/>
            <person name="Ishida J."/>
            <person name="Jiang P.X."/>
            <person name="Jones T."/>
            <person name="Kawai J."/>
            <person name="Kamiya A."/>
            <person name="Meyers C."/>
            <person name="Nakajima M."/>
            <person name="Narusaka M."/>
            <person name="Seki M."/>
            <person name="Sakurai T."/>
            <person name="Satou M."/>
            <person name="Tamse R."/>
            <person name="Vaysberg M."/>
            <person name="Wallender E.K."/>
            <person name="Wong C."/>
            <person name="Yamamura Y."/>
            <person name="Yuan S."/>
            <person name="Shinozaki K."/>
            <person name="Davis R.W."/>
            <person name="Theologis A."/>
            <person name="Ecker J.R."/>
        </authorList>
    </citation>
    <scope>NUCLEOTIDE SEQUENCE [LARGE SCALE MRNA]</scope>
    <source>
        <strain>cv. Columbia</strain>
    </source>
</reference>
<reference key="5">
    <citation type="journal article" date="2005" name="Plant J.">
        <title>The transcription factor AtGRF5 and the transcription coactivator AN3 regulate cell proliferation in leaf primordia of Arabidopsis thaliana.</title>
        <authorList>
            <person name="Horiguchi G."/>
            <person name="Kim G.T."/>
            <person name="Tsukaya H."/>
        </authorList>
    </citation>
    <scope>FUNCTION</scope>
    <scope>DISRUPTION PHENOTYPE</scope>
    <scope>TISSUE SPECIFICITY</scope>
    <scope>INTERACTION WITH GRF5 AND GRF9</scope>
</reference>
<reference key="6">
    <citation type="journal article" date="2009" name="Plant J.">
        <title>Coordination of cell proliferation and cell expansion mediated by ribosome-related processes in the leaves of Arabidopsis thaliana.</title>
        <authorList>
            <person name="Fujikura U."/>
            <person name="Horiguchi G."/>
            <person name="Ponce M.R."/>
            <person name="Micol J.L."/>
            <person name="Tsukaya H."/>
        </authorList>
    </citation>
    <scope>FUNCTION</scope>
    <scope>DISRUPTION PHENOTYPE</scope>
</reference>
<reference key="7">
    <citation type="journal article" date="2009" name="Plant Physiol.">
        <title>The Arabidopsis GRF-INTERACTING FACTOR gene family performs an overlapping function in determining organ size as well as multiple developmental properties.</title>
        <authorList>
            <person name="Lee B.H."/>
            <person name="Ko J.H."/>
            <person name="Lee S."/>
            <person name="Lee Y."/>
            <person name="Pak J.H."/>
            <person name="Kim J.H."/>
        </authorList>
    </citation>
    <scope>GENE FAMILY</scope>
    <scope>FUNCTION</scope>
    <scope>DISRUPTION PHENOTYPE</scope>
</reference>
<reference key="8">
    <citation type="journal article" date="2011" name="J. Exp. Bot.">
        <title>miR396-targeted AtGRF transcription factors are required for coordination of cell division and differentiation during leaf development in Arabidopsis.</title>
        <authorList>
            <person name="Wang L."/>
            <person name="Gu X."/>
            <person name="Xu D."/>
            <person name="Wang W."/>
            <person name="Wang H."/>
            <person name="Zeng M."/>
            <person name="Chang Z."/>
            <person name="Huang H."/>
            <person name="Cui X."/>
        </authorList>
    </citation>
    <scope>TISSUE SPECIFICITY</scope>
</reference>
<reference key="9">
    <citation type="journal article" date="2011" name="Plant Cell Physiol.">
        <title>ANGUSTIFOLIA3 plays roles in adaxial/abaxial patterning and growth in leaf morphogenesis.</title>
        <authorList>
            <person name="Horiguchi G."/>
            <person name="Nakayama H."/>
            <person name="Ishikawa N."/>
            <person name="Kubo M."/>
            <person name="Demura T."/>
            <person name="Fukuda H."/>
            <person name="Tsukaya H."/>
        </authorList>
    </citation>
    <scope>FUNCTION</scope>
    <scope>TISSUE SPECIFICITY</scope>
</reference>
<reference key="10">
    <citation type="journal article" date="2011" name="Plant Physiol.">
        <title>Key proliferative activity in the junction between the leaf blade and leaf petiole of Arabidopsis.</title>
        <authorList>
            <person name="Ichihashi Y."/>
            <person name="Kawade K."/>
            <person name="Usami T."/>
            <person name="Horiguchi G."/>
            <person name="Takahashi T."/>
            <person name="Tsukaya H."/>
        </authorList>
    </citation>
    <scope>TISSUE SPECIFICITY</scope>
    <scope>DISRUPTION PHENOTYPE</scope>
</reference>
<reference key="11">
    <citation type="journal article" date="2012" name="Development">
        <title>Stable establishment of cotyledon identity during embryogenesis in Arabidopsis by ANGUSTIFOLIA3 and HANABA TARANU.</title>
        <authorList>
            <person name="Kanei M."/>
            <person name="Horiguchi G."/>
            <person name="Tsukaya H."/>
        </authorList>
    </citation>
    <scope>FUNCTION</scope>
    <scope>DISRUPTION PHENOTYPE</scope>
    <source>
        <strain>cv. Columbia</strain>
        <strain>cv. Wassilewskija</strain>
    </source>
</reference>
<feature type="chain" id="PRO_0000419318" description="GRF1-interacting factor 1">
    <location>
        <begin position="1"/>
        <end position="210"/>
    </location>
</feature>
<feature type="region of interest" description="Disordered" evidence="1">
    <location>
        <begin position="135"/>
        <end position="210"/>
    </location>
</feature>
<feature type="compositionally biased region" description="Low complexity" evidence="1">
    <location>
        <begin position="135"/>
        <end position="152"/>
    </location>
</feature>
<feature type="compositionally biased region" description="Gly residues" evidence="1">
    <location>
        <begin position="182"/>
        <end position="198"/>
    </location>
</feature>
<comment type="function">
    <text evidence="2 3 4 5 7 9">Transcription coactivator that plays a role in the regulation of cell expansion in leaf and cotyledons tissues. Component of a network formed by miR396, the GRFs and their interacting factors (GIFs) acting in the regulation of meristem function, at least partially through the control of cell proliferation (PubMed:19392710). Appears to function synergistically with GRF1 as a transcriptional coactivator. Acts together with GRF5 for the development of appropriate leaf size and shape through the promotion and/or maintenance of cell proliferation activity in leaf primordia. Plays a role in adaxial/abaxial patterning and growth in leaf morphogenesis. GIFs are involved in the positive regulation of cell proliferation of lateral organs in a functionally redundant manner. Together with GATA18/HAN, mediates cotyledon identity by preventing ectopic root formation through the repression of PLT1 expression (PubMed:22669825).</text>
</comment>
<comment type="subunit">
    <text evidence="2 3">Interacts with GRF1, GRF2, GRF5 and GRF9.</text>
</comment>
<comment type="interaction">
    <interactant intactId="EBI-1396623">
        <id>Q8L8A5</id>
    </interactant>
    <interactant intactId="EBI-1396842">
        <id>O81001</id>
        <label>GRF1</label>
    </interactant>
    <organismsDiffer>false</organismsDiffer>
    <experiments>6</experiments>
</comment>
<comment type="interaction">
    <interactant intactId="EBI-1396623">
        <id>Q8L8A5</id>
    </interactant>
    <interactant intactId="EBI-1396893">
        <id>Q8L8A8</id>
        <label>GRF2</label>
    </interactant>
    <organismsDiffer>false</organismsDiffer>
    <experiments>4</experiments>
</comment>
<comment type="interaction">
    <interactant intactId="EBI-1396623">
        <id>Q8L8A5</id>
    </interactant>
    <interactant intactId="EBI-1396671">
        <id>Q8L8A7</id>
        <label>GRF4</label>
    </interactant>
    <organismsDiffer>false</organismsDiffer>
    <experiments>3</experiments>
</comment>
<comment type="interaction">
    <interactant intactId="EBI-1396623">
        <id>Q8L8A5</id>
    </interactant>
    <interactant intactId="EBI-1396652">
        <id>Q8L8A6</id>
        <label>GRF5</label>
    </interactant>
    <organismsDiffer>false</organismsDiffer>
    <experiments>4</experiments>
</comment>
<comment type="interaction">
    <interactant intactId="EBI-1396623">
        <id>Q8L8A5</id>
    </interactant>
    <interactant intactId="EBI-15193797">
        <id>Q9ZQ12</id>
        <label>GRF6</label>
    </interactant>
    <organismsDiffer>false</organismsDiffer>
    <experiments>3</experiments>
</comment>
<comment type="interaction">
    <interactant intactId="EBI-1396623">
        <id>Q8L8A5</id>
    </interactant>
    <interactant intactId="EBI-1396638">
        <id>Q8S9M3</id>
        <label>GRF9</label>
    </interactant>
    <organismsDiffer>false</organismsDiffer>
    <experiments>4</experiments>
</comment>
<comment type="interaction">
    <interactant intactId="EBI-1396623">
        <id>Q8L8A5</id>
    </interactant>
    <interactant intactId="EBI-3133327">
        <id>O82277</id>
        <label>TCP10</label>
    </interactant>
    <organismsDiffer>false</organismsDiffer>
    <experiments>3</experiments>
</comment>
<comment type="interaction">
    <interactant intactId="EBI-1396623">
        <id>Q8L8A5</id>
    </interactant>
    <interactant intactId="EBI-4426144">
        <id>Q9C9L2</id>
        <label>TCP15</label>
    </interactant>
    <organismsDiffer>false</organismsDiffer>
    <experiments>3</experiments>
</comment>
<comment type="interaction">
    <interactant intactId="EBI-1396623">
        <id>Q8L8A5</id>
    </interactant>
    <interactant intactId="EBI-15192325">
        <id>Q8LPR5</id>
        <label>TCP4</label>
    </interactant>
    <organismsDiffer>false</organismsDiffer>
    <experiments>3</experiments>
</comment>
<comment type="interaction">
    <interactant intactId="EBI-1396623">
        <id>Q8L8A5</id>
    </interactant>
    <interactant intactId="EBI-9838721">
        <id>O64647</id>
        <label>TCP9</label>
    </interactant>
    <organismsDiffer>false</organismsDiffer>
    <experiments>3</experiments>
</comment>
<comment type="interaction">
    <interactant intactId="EBI-1396623">
        <id>Q8L8A5</id>
    </interactant>
    <interactant intactId="EBI-15193011">
        <id>Q9LM84</id>
        <label>WOX14</label>
    </interactant>
    <organismsDiffer>false</organismsDiffer>
    <experiments>3</experiments>
</comment>
<comment type="tissue specificity">
    <text evidence="2 3 6 7 8">Strongly expressed in actively growing and developing tissues, such as roots, upper stems, and shoot tips and flower buds. Also expressed in mature flowers. Not expressed in the shoot apical meristem (SAM). Highly accumulated in the proximal part of leaf primordia, in the key proliferative zone at the junction region between the leaf blade and leaf petiole.</text>
</comment>
<comment type="disruption phenotype">
    <text evidence="2 3 4 5 8 9">Small and narrow lateral organs, such as leaves, cotyledons, and flowers. Significant defects in the number of cells in both the leaf blade and leaf petiole (PubMed:19392710, PubMed:22669825). Excessive postmitotic cell enlargement in leaves (compensation phenotype) (PubMed:19392710). Plant missing GIF1/AN3 and OLI2, OLI5 or OLI7 have a strong compensation phenotype (PubMed:19392710). The double mutant an3 han-30 exhibits severe defects in cotyledon development such as ectopic roots formation at the apical region of the embryo and seedlings, and associated with an abnormal expansion of PLT1 expression from the basal embryonic region to the apical region (PubMed:22669825).</text>
</comment>
<comment type="similarity">
    <text evidence="13">Belongs to the SS18 family.</text>
</comment>
<sequence>MQQHLMQMQPMMAGYYPSNVTSDHIQQYLDENKSLILKIVESQNSGKLSECAENQARLQRNLMYLAAIADSQPQPPSVHSQYGSAGGGMIQGEGGSHYLQQQQATQQQQMTQQSLMAARSSMLYAQQQQQQQPYATLQHQQLHHSQLGMSSSSGGGGSSGLHILQGEAGGFHDFGRGKPEMGSGGGGEGRGGSSGDGGETLYLKSSDDGN</sequence>
<gene>
    <name evidence="10" type="primary">GIF1</name>
    <name evidence="11" type="synonym">AN3</name>
    <name evidence="12" type="synonym">GIF</name>
    <name evidence="14" type="ordered locus">At5g28640</name>
    <name evidence="15" type="ORF">F4I4.20</name>
</gene>
<organism>
    <name type="scientific">Arabidopsis thaliana</name>
    <name type="common">Mouse-ear cress</name>
    <dbReference type="NCBI Taxonomy" id="3702"/>
    <lineage>
        <taxon>Eukaryota</taxon>
        <taxon>Viridiplantae</taxon>
        <taxon>Streptophyta</taxon>
        <taxon>Embryophyta</taxon>
        <taxon>Tracheophyta</taxon>
        <taxon>Spermatophyta</taxon>
        <taxon>Magnoliopsida</taxon>
        <taxon>eudicotyledons</taxon>
        <taxon>Gunneridae</taxon>
        <taxon>Pentapetalae</taxon>
        <taxon>rosids</taxon>
        <taxon>malvids</taxon>
        <taxon>Brassicales</taxon>
        <taxon>Brassicaceae</taxon>
        <taxon>Camelineae</taxon>
        <taxon>Arabidopsis</taxon>
    </lineage>
</organism>
<keyword id="KW-0010">Activator</keyword>
<keyword id="KW-1185">Reference proteome</keyword>
<keyword id="KW-0804">Transcription</keyword>
<keyword id="KW-0805">Transcription regulation</keyword>